<name>Y1586_DICDI</name>
<accession>Q54EQ9</accession>
<keyword id="KW-1185">Reference proteome</keyword>
<feature type="chain" id="PRO_0000346888" description="Putative uncharacterized protein DDB_G0291608">
    <location>
        <begin position="1"/>
        <end position="919"/>
    </location>
</feature>
<feature type="region of interest" description="Disordered" evidence="1">
    <location>
        <begin position="1"/>
        <end position="167"/>
    </location>
</feature>
<feature type="region of interest" description="Disordered" evidence="1">
    <location>
        <begin position="179"/>
        <end position="312"/>
    </location>
</feature>
<feature type="region of interest" description="Disordered" evidence="1">
    <location>
        <begin position="415"/>
        <end position="491"/>
    </location>
</feature>
<feature type="region of interest" description="Disordered" evidence="1">
    <location>
        <begin position="553"/>
        <end position="739"/>
    </location>
</feature>
<feature type="region of interest" description="Disordered" evidence="1">
    <location>
        <begin position="751"/>
        <end position="863"/>
    </location>
</feature>
<feature type="region of interest" description="Disordered" evidence="1">
    <location>
        <begin position="883"/>
        <end position="906"/>
    </location>
</feature>
<feature type="compositionally biased region" description="Low complexity" evidence="1">
    <location>
        <begin position="1"/>
        <end position="15"/>
    </location>
</feature>
<feature type="compositionally biased region" description="Polar residues" evidence="1">
    <location>
        <begin position="16"/>
        <end position="25"/>
    </location>
</feature>
<feature type="compositionally biased region" description="Low complexity" evidence="1">
    <location>
        <begin position="34"/>
        <end position="75"/>
    </location>
</feature>
<feature type="compositionally biased region" description="Low complexity" evidence="1">
    <location>
        <begin position="96"/>
        <end position="107"/>
    </location>
</feature>
<feature type="compositionally biased region" description="Low complexity" evidence="1">
    <location>
        <begin position="141"/>
        <end position="153"/>
    </location>
</feature>
<feature type="compositionally biased region" description="Basic and acidic residues" evidence="1">
    <location>
        <begin position="154"/>
        <end position="167"/>
    </location>
</feature>
<feature type="compositionally biased region" description="Low complexity" evidence="1">
    <location>
        <begin position="186"/>
        <end position="292"/>
    </location>
</feature>
<feature type="compositionally biased region" description="Polar residues" evidence="1">
    <location>
        <begin position="420"/>
        <end position="433"/>
    </location>
</feature>
<feature type="compositionally biased region" description="Low complexity" evidence="1">
    <location>
        <begin position="450"/>
        <end position="471"/>
    </location>
</feature>
<feature type="compositionally biased region" description="Low complexity" evidence="1">
    <location>
        <begin position="553"/>
        <end position="564"/>
    </location>
</feature>
<feature type="compositionally biased region" description="Low complexity" evidence="1">
    <location>
        <begin position="573"/>
        <end position="589"/>
    </location>
</feature>
<feature type="compositionally biased region" description="Low complexity" evidence="1">
    <location>
        <begin position="618"/>
        <end position="635"/>
    </location>
</feature>
<feature type="compositionally biased region" description="Polar residues" evidence="1">
    <location>
        <begin position="678"/>
        <end position="695"/>
    </location>
</feature>
<feature type="compositionally biased region" description="Low complexity" evidence="1">
    <location>
        <begin position="712"/>
        <end position="723"/>
    </location>
</feature>
<feature type="compositionally biased region" description="Polar residues" evidence="1">
    <location>
        <begin position="754"/>
        <end position="768"/>
    </location>
</feature>
<feature type="compositionally biased region" description="Basic and acidic residues" evidence="1">
    <location>
        <begin position="785"/>
        <end position="797"/>
    </location>
</feature>
<feature type="compositionally biased region" description="Low complexity" evidence="1">
    <location>
        <begin position="798"/>
        <end position="863"/>
    </location>
</feature>
<feature type="compositionally biased region" description="Polar residues" evidence="1">
    <location>
        <begin position="883"/>
        <end position="899"/>
    </location>
</feature>
<evidence type="ECO:0000256" key="1">
    <source>
        <dbReference type="SAM" id="MobiDB-lite"/>
    </source>
</evidence>
<dbReference type="EMBL" id="AAFI02000177">
    <property type="protein sequence ID" value="EAL61788.1"/>
    <property type="molecule type" value="Genomic_DNA"/>
</dbReference>
<dbReference type="RefSeq" id="XP_635181.1">
    <property type="nucleotide sequence ID" value="XM_630089.1"/>
</dbReference>
<dbReference type="SMR" id="Q54EQ9"/>
<dbReference type="STRING" id="44689.Q54EQ9"/>
<dbReference type="GlyGen" id="Q54EQ9">
    <property type="glycosylation" value="2 sites"/>
</dbReference>
<dbReference type="PaxDb" id="44689-DDB0191586"/>
<dbReference type="EnsemblProtists" id="EAL61788">
    <property type="protein sequence ID" value="EAL61788"/>
    <property type="gene ID" value="DDB_G0291608"/>
</dbReference>
<dbReference type="GeneID" id="8628127"/>
<dbReference type="KEGG" id="ddi:DDB_G0291608"/>
<dbReference type="dictyBase" id="DDB_G0291608"/>
<dbReference type="VEuPathDB" id="AmoebaDB:DDB_G0291608"/>
<dbReference type="eggNOG" id="ENOG502RBZQ">
    <property type="taxonomic scope" value="Eukaryota"/>
</dbReference>
<dbReference type="HOGENOM" id="CLU_317232_0_0_1"/>
<dbReference type="InParanoid" id="Q54EQ9"/>
<dbReference type="OMA" id="MPHSPHM"/>
<dbReference type="PRO" id="PR:Q54EQ9"/>
<dbReference type="Proteomes" id="UP000002195">
    <property type="component" value="Chromosome 6"/>
</dbReference>
<proteinExistence type="predicted"/>
<protein>
    <recommendedName>
        <fullName>Putative uncharacterized protein DDB_G0291608</fullName>
    </recommendedName>
</protein>
<sequence length="919" mass="104038">MEALILLSSQQSGSIKNNCASTSDIENVEDDDSIVIVSDSPTSSPVTLSTSSPVSSSSSSSPISTSVVPPTSSSSNKKANGLFSLIATELSQLDRSSPSSSPNTPKTPKTPKTPKTPKKTSPDSNEANQEVPKQKEVFEHTPTTTSTSTTPIKPVKDPKEKEKDLENDRKRQSFMLHWRFKPSTANNTNNNNNINNNNNINSSSSSNNNNNNNNNNNNNNNNNNNNNNNNNNNINNSSNNNSNCNNNNNNNNNNNNNNNNNSNNTQPLSPTTASQQANSQQNQQSSPTSSQTNETNGNPPEFNRGRRNSTPSLQNFVSHWKFDPKAHQKQQILQQHQQQLLLQQQEQQLQQQLLQQQQQQQQQQQQQQQQQQQQQQQQQQQQQQLQQQQQQQLQQQQQQQQQQQQQYFRPISPEHIYESPNENNNGGSFQKPNTHFHPYSRGPLGLNLKGVSGSPSHSPRVSQSPRVPSHPHSADQSPFHTPRQTERRLSLPSVPSYQAAYQSYQQQHTQQQTTIQQQQNQQHQYQQQYQQLQQLQQQQQQQQQQQQQQQQQQQQQQQQQQSSSPPSPPSPQSQPQNSSSPRQPSQTPQFYIPISNIHRHHQQIHSPHLSPHPPHSPHMPQSPHMPHSPHLMPHSPHSPHMPHSPHMPHSPHMPHSPHMPHSPHMPHSPHHMPHSPHYGSSPNLNGGKGSNNFLQSIPEVPYGNNLTNLNGSSVDSYSNSSPTPQSPPFSPHHQSTIKPCIITPSPRLLKTHNENYMSSPRQPLSPHNQHVYLSHSPSPPPSSSPHEHCNYIDKNDEYYSNNNNNNNYNNNNNNNNENCNHYHNNSSSHNYQTNNNYCNNNNNNNNNNNNNNNNNNNNNNNIINNNIIKEDKLPSMRDLLSHLNINHQDGPNSASSTPRLPTDHINNIDEKSKSKLLFF</sequence>
<organism>
    <name type="scientific">Dictyostelium discoideum</name>
    <name type="common">Social amoeba</name>
    <dbReference type="NCBI Taxonomy" id="44689"/>
    <lineage>
        <taxon>Eukaryota</taxon>
        <taxon>Amoebozoa</taxon>
        <taxon>Evosea</taxon>
        <taxon>Eumycetozoa</taxon>
        <taxon>Dictyostelia</taxon>
        <taxon>Dictyosteliales</taxon>
        <taxon>Dictyosteliaceae</taxon>
        <taxon>Dictyostelium</taxon>
    </lineage>
</organism>
<reference key="1">
    <citation type="journal article" date="2005" name="Nature">
        <title>The genome of the social amoeba Dictyostelium discoideum.</title>
        <authorList>
            <person name="Eichinger L."/>
            <person name="Pachebat J.A."/>
            <person name="Gloeckner G."/>
            <person name="Rajandream M.A."/>
            <person name="Sucgang R."/>
            <person name="Berriman M."/>
            <person name="Song J."/>
            <person name="Olsen R."/>
            <person name="Szafranski K."/>
            <person name="Xu Q."/>
            <person name="Tunggal B."/>
            <person name="Kummerfeld S."/>
            <person name="Madera M."/>
            <person name="Konfortov B.A."/>
            <person name="Rivero F."/>
            <person name="Bankier A.T."/>
            <person name="Lehmann R."/>
            <person name="Hamlin N."/>
            <person name="Davies R."/>
            <person name="Gaudet P."/>
            <person name="Fey P."/>
            <person name="Pilcher K."/>
            <person name="Chen G."/>
            <person name="Saunders D."/>
            <person name="Sodergren E.J."/>
            <person name="Davis P."/>
            <person name="Kerhornou A."/>
            <person name="Nie X."/>
            <person name="Hall N."/>
            <person name="Anjard C."/>
            <person name="Hemphill L."/>
            <person name="Bason N."/>
            <person name="Farbrother P."/>
            <person name="Desany B."/>
            <person name="Just E."/>
            <person name="Morio T."/>
            <person name="Rost R."/>
            <person name="Churcher C.M."/>
            <person name="Cooper J."/>
            <person name="Haydock S."/>
            <person name="van Driessche N."/>
            <person name="Cronin A."/>
            <person name="Goodhead I."/>
            <person name="Muzny D.M."/>
            <person name="Mourier T."/>
            <person name="Pain A."/>
            <person name="Lu M."/>
            <person name="Harper D."/>
            <person name="Lindsay R."/>
            <person name="Hauser H."/>
            <person name="James K.D."/>
            <person name="Quiles M."/>
            <person name="Madan Babu M."/>
            <person name="Saito T."/>
            <person name="Buchrieser C."/>
            <person name="Wardroper A."/>
            <person name="Felder M."/>
            <person name="Thangavelu M."/>
            <person name="Johnson D."/>
            <person name="Knights A."/>
            <person name="Loulseged H."/>
            <person name="Mungall K.L."/>
            <person name="Oliver K."/>
            <person name="Price C."/>
            <person name="Quail M.A."/>
            <person name="Urushihara H."/>
            <person name="Hernandez J."/>
            <person name="Rabbinowitsch E."/>
            <person name="Steffen D."/>
            <person name="Sanders M."/>
            <person name="Ma J."/>
            <person name="Kohara Y."/>
            <person name="Sharp S."/>
            <person name="Simmonds M.N."/>
            <person name="Spiegler S."/>
            <person name="Tivey A."/>
            <person name="Sugano S."/>
            <person name="White B."/>
            <person name="Walker D."/>
            <person name="Woodward J.R."/>
            <person name="Winckler T."/>
            <person name="Tanaka Y."/>
            <person name="Shaulsky G."/>
            <person name="Schleicher M."/>
            <person name="Weinstock G.M."/>
            <person name="Rosenthal A."/>
            <person name="Cox E.C."/>
            <person name="Chisholm R.L."/>
            <person name="Gibbs R.A."/>
            <person name="Loomis W.F."/>
            <person name="Platzer M."/>
            <person name="Kay R.R."/>
            <person name="Williams J.G."/>
            <person name="Dear P.H."/>
            <person name="Noegel A.A."/>
            <person name="Barrell B.G."/>
            <person name="Kuspa A."/>
        </authorList>
    </citation>
    <scope>NUCLEOTIDE SEQUENCE [LARGE SCALE GENOMIC DNA]</scope>
    <source>
        <strain>AX4</strain>
    </source>
</reference>
<gene>
    <name type="ORF">DDB_G0291608</name>
</gene>